<evidence type="ECO:0000255" key="1">
    <source>
        <dbReference type="HAMAP-Rule" id="MF_00300"/>
    </source>
</evidence>
<feature type="chain" id="PRO_0000256315" description="Chorismate synthase">
    <location>
        <begin position="1"/>
        <end position="363"/>
    </location>
</feature>
<feature type="binding site" evidence="1">
    <location>
        <position position="48"/>
    </location>
    <ligand>
        <name>NADP(+)</name>
        <dbReference type="ChEBI" id="CHEBI:58349"/>
    </ligand>
</feature>
<feature type="binding site" evidence="1">
    <location>
        <position position="54"/>
    </location>
    <ligand>
        <name>NADP(+)</name>
        <dbReference type="ChEBI" id="CHEBI:58349"/>
    </ligand>
</feature>
<feature type="binding site" evidence="1">
    <location>
        <begin position="125"/>
        <end position="127"/>
    </location>
    <ligand>
        <name>FMN</name>
        <dbReference type="ChEBI" id="CHEBI:58210"/>
    </ligand>
</feature>
<feature type="binding site" evidence="1">
    <location>
        <begin position="237"/>
        <end position="238"/>
    </location>
    <ligand>
        <name>FMN</name>
        <dbReference type="ChEBI" id="CHEBI:58210"/>
    </ligand>
</feature>
<feature type="binding site" evidence="1">
    <location>
        <position position="277"/>
    </location>
    <ligand>
        <name>FMN</name>
        <dbReference type="ChEBI" id="CHEBI:58210"/>
    </ligand>
</feature>
<feature type="binding site" evidence="1">
    <location>
        <begin position="292"/>
        <end position="296"/>
    </location>
    <ligand>
        <name>FMN</name>
        <dbReference type="ChEBI" id="CHEBI:58210"/>
    </ligand>
</feature>
<feature type="binding site" evidence="1">
    <location>
        <position position="318"/>
    </location>
    <ligand>
        <name>FMN</name>
        <dbReference type="ChEBI" id="CHEBI:58210"/>
    </ligand>
</feature>
<gene>
    <name evidence="1" type="primary">aroC</name>
    <name type="ordered locus">PSPPH_1812</name>
</gene>
<name>AROC_PSE14</name>
<dbReference type="EC" id="4.2.3.5" evidence="1"/>
<dbReference type="EMBL" id="CP000058">
    <property type="protein sequence ID" value="AAZ34989.1"/>
    <property type="molecule type" value="Genomic_DNA"/>
</dbReference>
<dbReference type="RefSeq" id="WP_011168227.1">
    <property type="nucleotide sequence ID" value="NC_005773.3"/>
</dbReference>
<dbReference type="SMR" id="Q48KN0"/>
<dbReference type="KEGG" id="psp:PSPPH_1812"/>
<dbReference type="eggNOG" id="COG0082">
    <property type="taxonomic scope" value="Bacteria"/>
</dbReference>
<dbReference type="HOGENOM" id="CLU_034547_0_2_6"/>
<dbReference type="UniPathway" id="UPA00053">
    <property type="reaction ID" value="UER00090"/>
</dbReference>
<dbReference type="Proteomes" id="UP000000551">
    <property type="component" value="Chromosome"/>
</dbReference>
<dbReference type="GO" id="GO:0005829">
    <property type="term" value="C:cytosol"/>
    <property type="evidence" value="ECO:0007669"/>
    <property type="project" value="TreeGrafter"/>
</dbReference>
<dbReference type="GO" id="GO:0004107">
    <property type="term" value="F:chorismate synthase activity"/>
    <property type="evidence" value="ECO:0007669"/>
    <property type="project" value="UniProtKB-UniRule"/>
</dbReference>
<dbReference type="GO" id="GO:0010181">
    <property type="term" value="F:FMN binding"/>
    <property type="evidence" value="ECO:0007669"/>
    <property type="project" value="TreeGrafter"/>
</dbReference>
<dbReference type="GO" id="GO:0008652">
    <property type="term" value="P:amino acid biosynthetic process"/>
    <property type="evidence" value="ECO:0007669"/>
    <property type="project" value="UniProtKB-KW"/>
</dbReference>
<dbReference type="GO" id="GO:0009073">
    <property type="term" value="P:aromatic amino acid family biosynthetic process"/>
    <property type="evidence" value="ECO:0007669"/>
    <property type="project" value="UniProtKB-KW"/>
</dbReference>
<dbReference type="GO" id="GO:0009423">
    <property type="term" value="P:chorismate biosynthetic process"/>
    <property type="evidence" value="ECO:0007669"/>
    <property type="project" value="UniProtKB-UniRule"/>
</dbReference>
<dbReference type="CDD" id="cd07304">
    <property type="entry name" value="Chorismate_synthase"/>
    <property type="match status" value="1"/>
</dbReference>
<dbReference type="FunFam" id="3.60.150.10:FF:000001">
    <property type="entry name" value="Chorismate synthase"/>
    <property type="match status" value="1"/>
</dbReference>
<dbReference type="Gene3D" id="3.60.150.10">
    <property type="entry name" value="Chorismate synthase AroC"/>
    <property type="match status" value="1"/>
</dbReference>
<dbReference type="HAMAP" id="MF_00300">
    <property type="entry name" value="Chorismate_synth"/>
    <property type="match status" value="1"/>
</dbReference>
<dbReference type="InterPro" id="IPR000453">
    <property type="entry name" value="Chorismate_synth"/>
</dbReference>
<dbReference type="InterPro" id="IPR035904">
    <property type="entry name" value="Chorismate_synth_AroC_sf"/>
</dbReference>
<dbReference type="InterPro" id="IPR020541">
    <property type="entry name" value="Chorismate_synthase_CS"/>
</dbReference>
<dbReference type="NCBIfam" id="TIGR00033">
    <property type="entry name" value="aroC"/>
    <property type="match status" value="1"/>
</dbReference>
<dbReference type="NCBIfam" id="NF003793">
    <property type="entry name" value="PRK05382.1"/>
    <property type="match status" value="1"/>
</dbReference>
<dbReference type="PANTHER" id="PTHR21085">
    <property type="entry name" value="CHORISMATE SYNTHASE"/>
    <property type="match status" value="1"/>
</dbReference>
<dbReference type="PANTHER" id="PTHR21085:SF0">
    <property type="entry name" value="CHORISMATE SYNTHASE"/>
    <property type="match status" value="1"/>
</dbReference>
<dbReference type="Pfam" id="PF01264">
    <property type="entry name" value="Chorismate_synt"/>
    <property type="match status" value="1"/>
</dbReference>
<dbReference type="PIRSF" id="PIRSF001456">
    <property type="entry name" value="Chorismate_synth"/>
    <property type="match status" value="1"/>
</dbReference>
<dbReference type="SUPFAM" id="SSF103263">
    <property type="entry name" value="Chorismate synthase, AroC"/>
    <property type="match status" value="1"/>
</dbReference>
<dbReference type="PROSITE" id="PS00787">
    <property type="entry name" value="CHORISMATE_SYNTHASE_1"/>
    <property type="match status" value="1"/>
</dbReference>
<dbReference type="PROSITE" id="PS00788">
    <property type="entry name" value="CHORISMATE_SYNTHASE_2"/>
    <property type="match status" value="1"/>
</dbReference>
<dbReference type="PROSITE" id="PS00789">
    <property type="entry name" value="CHORISMATE_SYNTHASE_3"/>
    <property type="match status" value="1"/>
</dbReference>
<comment type="function">
    <text evidence="1">Catalyzes the anti-1,4-elimination of the C-3 phosphate and the C-6 proR hydrogen from 5-enolpyruvylshikimate-3-phosphate (EPSP) to yield chorismate, which is the branch point compound that serves as the starting substrate for the three terminal pathways of aromatic amino acid biosynthesis. This reaction introduces a second double bond into the aromatic ring system.</text>
</comment>
<comment type="catalytic activity">
    <reaction evidence="1">
        <text>5-O-(1-carboxyvinyl)-3-phosphoshikimate = chorismate + phosphate</text>
        <dbReference type="Rhea" id="RHEA:21020"/>
        <dbReference type="ChEBI" id="CHEBI:29748"/>
        <dbReference type="ChEBI" id="CHEBI:43474"/>
        <dbReference type="ChEBI" id="CHEBI:57701"/>
        <dbReference type="EC" id="4.2.3.5"/>
    </reaction>
</comment>
<comment type="cofactor">
    <cofactor evidence="1">
        <name>FMNH2</name>
        <dbReference type="ChEBI" id="CHEBI:57618"/>
    </cofactor>
    <text evidence="1">Reduced FMN (FMNH(2)).</text>
</comment>
<comment type="pathway">
    <text evidence="1">Metabolic intermediate biosynthesis; chorismate biosynthesis; chorismate from D-erythrose 4-phosphate and phosphoenolpyruvate: step 7/7.</text>
</comment>
<comment type="subunit">
    <text evidence="1">Homotetramer.</text>
</comment>
<comment type="similarity">
    <text evidence="1">Belongs to the chorismate synthase family.</text>
</comment>
<reference key="1">
    <citation type="journal article" date="2005" name="J. Bacteriol.">
        <title>Whole-genome sequence analysis of Pseudomonas syringae pv. phaseolicola 1448A reveals divergence among pathovars in genes involved in virulence and transposition.</title>
        <authorList>
            <person name="Joardar V."/>
            <person name="Lindeberg M."/>
            <person name="Jackson R.W."/>
            <person name="Selengut J."/>
            <person name="Dodson R."/>
            <person name="Brinkac L.M."/>
            <person name="Daugherty S.C."/>
            <person name="DeBoy R.T."/>
            <person name="Durkin A.S."/>
            <person name="Gwinn Giglio M."/>
            <person name="Madupu R."/>
            <person name="Nelson W.C."/>
            <person name="Rosovitz M.J."/>
            <person name="Sullivan S.A."/>
            <person name="Crabtree J."/>
            <person name="Creasy T."/>
            <person name="Davidsen T.M."/>
            <person name="Haft D.H."/>
            <person name="Zafar N."/>
            <person name="Zhou L."/>
            <person name="Halpin R."/>
            <person name="Holley T."/>
            <person name="Khouri H.M."/>
            <person name="Feldblyum T.V."/>
            <person name="White O."/>
            <person name="Fraser C.M."/>
            <person name="Chatterjee A.K."/>
            <person name="Cartinhour S."/>
            <person name="Schneider D."/>
            <person name="Mansfield J.W."/>
            <person name="Collmer A."/>
            <person name="Buell R."/>
        </authorList>
    </citation>
    <scope>NUCLEOTIDE SEQUENCE [LARGE SCALE GENOMIC DNA]</scope>
    <source>
        <strain>1448A / Race 6</strain>
    </source>
</reference>
<keyword id="KW-0028">Amino-acid biosynthesis</keyword>
<keyword id="KW-0057">Aromatic amino acid biosynthesis</keyword>
<keyword id="KW-0274">FAD</keyword>
<keyword id="KW-0285">Flavoprotein</keyword>
<keyword id="KW-0288">FMN</keyword>
<keyword id="KW-0456">Lyase</keyword>
<keyword id="KW-0521">NADP</keyword>
<accession>Q48KN0</accession>
<organism>
    <name type="scientific">Pseudomonas savastanoi pv. phaseolicola (strain 1448A / Race 6)</name>
    <name type="common">Pseudomonas syringae pv. phaseolicola (strain 1448A / Race 6)</name>
    <dbReference type="NCBI Taxonomy" id="264730"/>
    <lineage>
        <taxon>Bacteria</taxon>
        <taxon>Pseudomonadati</taxon>
        <taxon>Pseudomonadota</taxon>
        <taxon>Gammaproteobacteria</taxon>
        <taxon>Pseudomonadales</taxon>
        <taxon>Pseudomonadaceae</taxon>
        <taxon>Pseudomonas</taxon>
    </lineage>
</organism>
<protein>
    <recommendedName>
        <fullName evidence="1">Chorismate synthase</fullName>
        <shortName evidence="1">CS</shortName>
        <ecNumber evidence="1">4.2.3.5</ecNumber>
    </recommendedName>
    <alternativeName>
        <fullName evidence="1">5-enolpyruvylshikimate-3-phosphate phospholyase</fullName>
    </alternativeName>
</protein>
<proteinExistence type="inferred from homology"/>
<sequence length="363" mass="39008">MSGNTFGKLFTVTTAGESHGPALVAIVDGCPPGLELDLQDLQRDLDRRKPGTSRHTTQRQEADEVEILSGVFEGKTTGASIGLLIRNTDQKSKDYSAIKDLFRPAHADYTYHHKYGIRDYRGGGRSSARETAMRVAAGAIAKKYLATQGIVIRGYMSQLGPIQIPFKTWDSVEDNAFFCPDPDKVPELEAYMDQLRRDQDSVGAKITVVAEGVMPGLGEPIFDRLDAELAHALMNINAVKGVEIGAGFDCVAQRGTEHRDEMTPLGFLSNQAGGILGGISSGQPIIAHLALKPTSSITTPGRSIDTDGNAADVITKGRHDPCVGIRATPIAEAMMAIVLLDHLLRHRGQNADVSVNTPVLGQL</sequence>